<organism>
    <name type="scientific">Blochmanniella pennsylvanica (strain BPEN)</name>
    <dbReference type="NCBI Taxonomy" id="291272"/>
    <lineage>
        <taxon>Bacteria</taxon>
        <taxon>Pseudomonadati</taxon>
        <taxon>Pseudomonadota</taxon>
        <taxon>Gammaproteobacteria</taxon>
        <taxon>Enterobacterales</taxon>
        <taxon>Enterobacteriaceae</taxon>
        <taxon>ant endosymbionts</taxon>
        <taxon>Candidatus Blochmanniella</taxon>
    </lineage>
</organism>
<comment type="function">
    <text evidence="1">Catalyzes the hydrolysis of N-succinyl-L,L-diaminopimelic acid (SDAP), forming succinate and LL-2,6-diaminopimelate (DAP), an intermediate involved in the bacterial biosynthesis of lysine and meso-diaminopimelic acid, an essential component of bacterial cell walls.</text>
</comment>
<comment type="catalytic activity">
    <reaction evidence="1">
        <text>N-succinyl-(2S,6S)-2,6-diaminopimelate + H2O = (2S,6S)-2,6-diaminopimelate + succinate</text>
        <dbReference type="Rhea" id="RHEA:22608"/>
        <dbReference type="ChEBI" id="CHEBI:15377"/>
        <dbReference type="ChEBI" id="CHEBI:30031"/>
        <dbReference type="ChEBI" id="CHEBI:57609"/>
        <dbReference type="ChEBI" id="CHEBI:58087"/>
        <dbReference type="EC" id="3.5.1.18"/>
    </reaction>
</comment>
<comment type="cofactor">
    <cofactor evidence="1">
        <name>Zn(2+)</name>
        <dbReference type="ChEBI" id="CHEBI:29105"/>
    </cofactor>
    <cofactor evidence="1">
        <name>Co(2+)</name>
        <dbReference type="ChEBI" id="CHEBI:48828"/>
    </cofactor>
    <text evidence="1">Binds 2 Zn(2+) or Co(2+) ions per subunit.</text>
</comment>
<comment type="pathway">
    <text evidence="1">Amino-acid biosynthesis; L-lysine biosynthesis via DAP pathway; LL-2,6-diaminopimelate from (S)-tetrahydrodipicolinate (succinylase route): step 3/3.</text>
</comment>
<comment type="subunit">
    <text evidence="1">Homodimer.</text>
</comment>
<comment type="similarity">
    <text evidence="1">Belongs to the peptidase M20A family. DapE subfamily.</text>
</comment>
<sequence length="384" mass="43483">MNYSALITLAQKLIQQPSVSPNHHSCHEIIANYLEKLNFNVELMRFDNTLNLWAFHSCKKQQKHTTLLFIGHTDVVDPGDPQFWDYPPFSGLVHNNMLHGRGAIDMKGALAAMLVATANFIDQYPNYQGRIAFLITSDEEGSGINGTTKVVESLIARNEHINYCIVGEPSSQDQLGDVIKNGRRGSLTGQLTIHGSQGHVAYPQFSKNPIHLIIPALSDLLNITWDREKSILFPPTAIQITNIYSNHKNNNVTPHTVILNFNVRFNDKCSIDNIKRYINDIFTRHTLPYNINWKLSAEPYFSKPGQLTNVAINAIKYYQKFEPRLETTGGTSDGRFIAKMGTEVIELGARNHMIHKVNEYIDLIDLKLLSSIYKKIIEDLILIQ</sequence>
<protein>
    <recommendedName>
        <fullName evidence="1">Succinyl-diaminopimelate desuccinylase</fullName>
        <shortName evidence="1">SDAP desuccinylase</shortName>
        <ecNumber evidence="1">3.5.1.18</ecNumber>
    </recommendedName>
    <alternativeName>
        <fullName evidence="1">N-succinyl-LL-2,6-diaminoheptanedioate amidohydrolase</fullName>
    </alternativeName>
</protein>
<evidence type="ECO:0000255" key="1">
    <source>
        <dbReference type="HAMAP-Rule" id="MF_01690"/>
    </source>
</evidence>
<accession>Q492F7</accession>
<proteinExistence type="inferred from homology"/>
<keyword id="KW-0028">Amino-acid biosynthesis</keyword>
<keyword id="KW-0170">Cobalt</keyword>
<keyword id="KW-0220">Diaminopimelate biosynthesis</keyword>
<keyword id="KW-0378">Hydrolase</keyword>
<keyword id="KW-0457">Lysine biosynthesis</keyword>
<keyword id="KW-0479">Metal-binding</keyword>
<keyword id="KW-1185">Reference proteome</keyword>
<keyword id="KW-0862">Zinc</keyword>
<dbReference type="EC" id="3.5.1.18" evidence="1"/>
<dbReference type="EMBL" id="CP000016">
    <property type="protein sequence ID" value="AAZ41144.1"/>
    <property type="molecule type" value="Genomic_DNA"/>
</dbReference>
<dbReference type="RefSeq" id="WP_011283055.1">
    <property type="nucleotide sequence ID" value="NC_007292.1"/>
</dbReference>
<dbReference type="SMR" id="Q492F7"/>
<dbReference type="STRING" id="291272.BPEN_534"/>
<dbReference type="KEGG" id="bpn:BPEN_534"/>
<dbReference type="eggNOG" id="COG0624">
    <property type="taxonomic scope" value="Bacteria"/>
</dbReference>
<dbReference type="HOGENOM" id="CLU_021802_4_0_6"/>
<dbReference type="OrthoDB" id="9809784at2"/>
<dbReference type="UniPathway" id="UPA00034">
    <property type="reaction ID" value="UER00021"/>
</dbReference>
<dbReference type="Proteomes" id="UP000007794">
    <property type="component" value="Chromosome"/>
</dbReference>
<dbReference type="GO" id="GO:0008777">
    <property type="term" value="F:acetylornithine deacetylase activity"/>
    <property type="evidence" value="ECO:0007669"/>
    <property type="project" value="TreeGrafter"/>
</dbReference>
<dbReference type="GO" id="GO:0050897">
    <property type="term" value="F:cobalt ion binding"/>
    <property type="evidence" value="ECO:0007669"/>
    <property type="project" value="UniProtKB-UniRule"/>
</dbReference>
<dbReference type="GO" id="GO:0009014">
    <property type="term" value="F:succinyl-diaminopimelate desuccinylase activity"/>
    <property type="evidence" value="ECO:0007669"/>
    <property type="project" value="UniProtKB-UniRule"/>
</dbReference>
<dbReference type="GO" id="GO:0008270">
    <property type="term" value="F:zinc ion binding"/>
    <property type="evidence" value="ECO:0007669"/>
    <property type="project" value="UniProtKB-UniRule"/>
</dbReference>
<dbReference type="GO" id="GO:0019877">
    <property type="term" value="P:diaminopimelate biosynthetic process"/>
    <property type="evidence" value="ECO:0007669"/>
    <property type="project" value="UniProtKB-UniRule"/>
</dbReference>
<dbReference type="GO" id="GO:0006526">
    <property type="term" value="P:L-arginine biosynthetic process"/>
    <property type="evidence" value="ECO:0007669"/>
    <property type="project" value="TreeGrafter"/>
</dbReference>
<dbReference type="GO" id="GO:0009089">
    <property type="term" value="P:lysine biosynthetic process via diaminopimelate"/>
    <property type="evidence" value="ECO:0007669"/>
    <property type="project" value="UniProtKB-UniRule"/>
</dbReference>
<dbReference type="CDD" id="cd03891">
    <property type="entry name" value="M20_DapE_proteobac"/>
    <property type="match status" value="1"/>
</dbReference>
<dbReference type="Gene3D" id="3.40.630.10">
    <property type="entry name" value="Zn peptidases"/>
    <property type="match status" value="2"/>
</dbReference>
<dbReference type="HAMAP" id="MF_01690">
    <property type="entry name" value="DapE"/>
    <property type="match status" value="1"/>
</dbReference>
<dbReference type="InterPro" id="IPR001261">
    <property type="entry name" value="ArgE/DapE_CS"/>
</dbReference>
<dbReference type="InterPro" id="IPR036264">
    <property type="entry name" value="Bact_exopeptidase_dim_dom"/>
</dbReference>
<dbReference type="InterPro" id="IPR005941">
    <property type="entry name" value="DapE_proteobac"/>
</dbReference>
<dbReference type="InterPro" id="IPR002933">
    <property type="entry name" value="Peptidase_M20"/>
</dbReference>
<dbReference type="InterPro" id="IPR011650">
    <property type="entry name" value="Peptidase_M20_dimer"/>
</dbReference>
<dbReference type="InterPro" id="IPR050072">
    <property type="entry name" value="Peptidase_M20A"/>
</dbReference>
<dbReference type="NCBIfam" id="TIGR01246">
    <property type="entry name" value="dapE_proteo"/>
    <property type="match status" value="1"/>
</dbReference>
<dbReference type="NCBIfam" id="NF009557">
    <property type="entry name" value="PRK13009.1"/>
    <property type="match status" value="1"/>
</dbReference>
<dbReference type="PANTHER" id="PTHR43808">
    <property type="entry name" value="ACETYLORNITHINE DEACETYLASE"/>
    <property type="match status" value="1"/>
</dbReference>
<dbReference type="PANTHER" id="PTHR43808:SF31">
    <property type="entry name" value="N-ACETYL-L-CITRULLINE DEACETYLASE"/>
    <property type="match status" value="1"/>
</dbReference>
<dbReference type="Pfam" id="PF07687">
    <property type="entry name" value="M20_dimer"/>
    <property type="match status" value="1"/>
</dbReference>
<dbReference type="Pfam" id="PF01546">
    <property type="entry name" value="Peptidase_M20"/>
    <property type="match status" value="1"/>
</dbReference>
<dbReference type="SUPFAM" id="SSF55031">
    <property type="entry name" value="Bacterial exopeptidase dimerisation domain"/>
    <property type="match status" value="1"/>
</dbReference>
<dbReference type="SUPFAM" id="SSF53187">
    <property type="entry name" value="Zn-dependent exopeptidases"/>
    <property type="match status" value="1"/>
</dbReference>
<dbReference type="PROSITE" id="PS00758">
    <property type="entry name" value="ARGE_DAPE_CPG2_1"/>
    <property type="match status" value="1"/>
</dbReference>
<dbReference type="PROSITE" id="PS00759">
    <property type="entry name" value="ARGE_DAPE_CPG2_2"/>
    <property type="match status" value="1"/>
</dbReference>
<name>DAPE_BLOPB</name>
<reference key="1">
    <citation type="journal article" date="2005" name="Genome Res.">
        <title>Genome sequence of Blochmannia pennsylvanicus indicates parallel evolutionary trends among bacterial mutualists of insects.</title>
        <authorList>
            <person name="Degnan P.H."/>
            <person name="Lazarus A.B."/>
            <person name="Wernegreen J.J."/>
        </authorList>
    </citation>
    <scope>NUCLEOTIDE SEQUENCE [LARGE SCALE GENOMIC DNA]</scope>
    <source>
        <strain>BPEN</strain>
    </source>
</reference>
<feature type="chain" id="PRO_0000375475" description="Succinyl-diaminopimelate desuccinylase">
    <location>
        <begin position="1"/>
        <end position="384"/>
    </location>
</feature>
<feature type="active site" evidence="1">
    <location>
        <position position="74"/>
    </location>
</feature>
<feature type="active site" description="Proton acceptor" evidence="1">
    <location>
        <position position="139"/>
    </location>
</feature>
<feature type="binding site" evidence="1">
    <location>
        <position position="72"/>
    </location>
    <ligand>
        <name>Zn(2+)</name>
        <dbReference type="ChEBI" id="CHEBI:29105"/>
        <label>1</label>
    </ligand>
</feature>
<feature type="binding site" evidence="1">
    <location>
        <position position="105"/>
    </location>
    <ligand>
        <name>Zn(2+)</name>
        <dbReference type="ChEBI" id="CHEBI:29105"/>
        <label>1</label>
    </ligand>
</feature>
<feature type="binding site" evidence="1">
    <location>
        <position position="105"/>
    </location>
    <ligand>
        <name>Zn(2+)</name>
        <dbReference type="ChEBI" id="CHEBI:29105"/>
        <label>2</label>
    </ligand>
</feature>
<feature type="binding site" evidence="1">
    <location>
        <position position="140"/>
    </location>
    <ligand>
        <name>Zn(2+)</name>
        <dbReference type="ChEBI" id="CHEBI:29105"/>
        <label>2</label>
    </ligand>
</feature>
<feature type="binding site" evidence="1">
    <location>
        <position position="168"/>
    </location>
    <ligand>
        <name>Zn(2+)</name>
        <dbReference type="ChEBI" id="CHEBI:29105"/>
        <label>1</label>
    </ligand>
</feature>
<feature type="binding site" evidence="1">
    <location>
        <position position="355"/>
    </location>
    <ligand>
        <name>Zn(2+)</name>
        <dbReference type="ChEBI" id="CHEBI:29105"/>
        <label>2</label>
    </ligand>
</feature>
<gene>
    <name evidence="1" type="primary">dapE</name>
    <name type="ordered locus">BPEN_534</name>
</gene>